<comment type="function">
    <text evidence="1">Negatively regulates the transcription of the flagellar master operon flhDC by binding to the upstream region of the operon.</text>
</comment>
<comment type="similarity">
    <text evidence="2">Belongs to the LysR transcriptional regulatory family.</text>
</comment>
<comment type="sequence caution" evidence="2">
    <conflict type="erroneous initiation">
        <sequence resource="EMBL-CDS" id="AAF33488"/>
    </conflict>
</comment>
<comment type="sequence caution" evidence="2">
    <conflict type="erroneous initiation">
        <sequence resource="EMBL-CDS" id="AAL22747"/>
    </conflict>
</comment>
<organism>
    <name type="scientific">Salmonella typhimurium (strain LT2 / SGSC1412 / ATCC 700720)</name>
    <dbReference type="NCBI Taxonomy" id="99287"/>
    <lineage>
        <taxon>Bacteria</taxon>
        <taxon>Pseudomonadati</taxon>
        <taxon>Pseudomonadota</taxon>
        <taxon>Gammaproteobacteria</taxon>
        <taxon>Enterobacterales</taxon>
        <taxon>Enterobacteriaceae</taxon>
        <taxon>Salmonella</taxon>
    </lineage>
</organism>
<keyword id="KW-0238">DNA-binding</keyword>
<keyword id="KW-1185">Reference proteome</keyword>
<keyword id="KW-0678">Repressor</keyword>
<keyword id="KW-0804">Transcription</keyword>
<keyword id="KW-0805">Transcription regulation</keyword>
<proteinExistence type="inferred from homology"/>
<gene>
    <name evidence="1" type="primary">hdfR</name>
    <name type="ordered locus">STM3897</name>
    <name type="ORF">STMD1.99</name>
</gene>
<sequence>MDTELLKTFLEVSRTRHFGRAAEALYLTQSAVSFRIRQLENQLGVNLFTRHRNNIRLTTAGEKLLPYAETLMNTWQAARKEVAHTSRHNEFSIGASASLWECMLNAWLGRLYQLQEPQSGLQFEARIAQRQSLVKQLHERQLDLLITTEAPKMDEFSSQLLGHFTLALYCSSPARKKSELNYLRLEWGPDFQQHETGLIAADEVPVLTTSSAELARQQLSALNGCSWLPVNWANEKGGLHTVADSATLSRPLYAIWLQNSDKYSLICDLLKTDVLDEQ</sequence>
<reference key="1">
    <citation type="journal article" date="2001" name="Nature">
        <title>Complete genome sequence of Salmonella enterica serovar Typhimurium LT2.</title>
        <authorList>
            <person name="McClelland M."/>
            <person name="Sanderson K.E."/>
            <person name="Spieth J."/>
            <person name="Clifton S.W."/>
            <person name="Latreille P."/>
            <person name="Courtney L."/>
            <person name="Porwollik S."/>
            <person name="Ali J."/>
            <person name="Dante M."/>
            <person name="Du F."/>
            <person name="Hou S."/>
            <person name="Layman D."/>
            <person name="Leonard S."/>
            <person name="Nguyen C."/>
            <person name="Scott K."/>
            <person name="Holmes A."/>
            <person name="Grewal N."/>
            <person name="Mulvaney E."/>
            <person name="Ryan E."/>
            <person name="Sun H."/>
            <person name="Florea L."/>
            <person name="Miller W."/>
            <person name="Stoneking T."/>
            <person name="Nhan M."/>
            <person name="Waterston R."/>
            <person name="Wilson R.K."/>
        </authorList>
    </citation>
    <scope>NUCLEOTIDE SEQUENCE [LARGE SCALE GENOMIC DNA]</scope>
    <source>
        <strain>LT2 / SGSC1412 / ATCC 700720</strain>
    </source>
</reference>
<name>HDFR_SALTY</name>
<feature type="chain" id="PRO_0000105636" description="HTH-type transcriptional regulator HdfR">
    <location>
        <begin position="1"/>
        <end position="278"/>
    </location>
</feature>
<feature type="domain" description="HTH lysR-type" evidence="1">
    <location>
        <begin position="1"/>
        <end position="58"/>
    </location>
</feature>
<feature type="DNA-binding region" description="H-T-H motif" evidence="1">
    <location>
        <begin position="18"/>
        <end position="37"/>
    </location>
</feature>
<dbReference type="EMBL" id="AF233324">
    <property type="protein sequence ID" value="AAF33488.1"/>
    <property type="status" value="ALT_INIT"/>
    <property type="molecule type" value="Genomic_DNA"/>
</dbReference>
<dbReference type="EMBL" id="AE006468">
    <property type="protein sequence ID" value="AAL22747.1"/>
    <property type="status" value="ALT_INIT"/>
    <property type="molecule type" value="Genomic_DNA"/>
</dbReference>
<dbReference type="SMR" id="P0A2Q0"/>
<dbReference type="STRING" id="99287.STM3897"/>
<dbReference type="PaxDb" id="99287-STM3897"/>
<dbReference type="KEGG" id="stm:STM3897"/>
<dbReference type="PATRIC" id="fig|99287.12.peg.4119"/>
<dbReference type="HOGENOM" id="CLU_039613_8_2_6"/>
<dbReference type="PhylomeDB" id="P0A2Q0"/>
<dbReference type="Proteomes" id="UP000001014">
    <property type="component" value="Chromosome"/>
</dbReference>
<dbReference type="GO" id="GO:0003677">
    <property type="term" value="F:DNA binding"/>
    <property type="evidence" value="ECO:0007669"/>
    <property type="project" value="UniProtKB-KW"/>
</dbReference>
<dbReference type="GO" id="GO:0003700">
    <property type="term" value="F:DNA-binding transcription factor activity"/>
    <property type="evidence" value="ECO:0000318"/>
    <property type="project" value="GO_Central"/>
</dbReference>
<dbReference type="GO" id="GO:0045892">
    <property type="term" value="P:negative regulation of DNA-templated transcription"/>
    <property type="evidence" value="ECO:0007669"/>
    <property type="project" value="UniProtKB-UniRule"/>
</dbReference>
<dbReference type="GO" id="GO:0006355">
    <property type="term" value="P:regulation of DNA-templated transcription"/>
    <property type="evidence" value="ECO:0000318"/>
    <property type="project" value="GO_Central"/>
</dbReference>
<dbReference type="FunFam" id="1.10.10.10:FF:000001">
    <property type="entry name" value="LysR family transcriptional regulator"/>
    <property type="match status" value="1"/>
</dbReference>
<dbReference type="Gene3D" id="1.10.10.10">
    <property type="entry name" value="Winged helix-like DNA-binding domain superfamily/Winged helix DNA-binding domain"/>
    <property type="match status" value="1"/>
</dbReference>
<dbReference type="HAMAP" id="MF_01233">
    <property type="entry name" value="HTH_type_HdfR"/>
    <property type="match status" value="1"/>
</dbReference>
<dbReference type="InterPro" id="IPR050176">
    <property type="entry name" value="LTTR"/>
</dbReference>
<dbReference type="InterPro" id="IPR005119">
    <property type="entry name" value="LysR_subst-bd"/>
</dbReference>
<dbReference type="InterPro" id="IPR020890">
    <property type="entry name" value="Tscrpt_reg_HTH_HdfR"/>
</dbReference>
<dbReference type="InterPro" id="IPR000847">
    <property type="entry name" value="Tscrpt_reg_HTH_LysR"/>
</dbReference>
<dbReference type="InterPro" id="IPR036388">
    <property type="entry name" value="WH-like_DNA-bd_sf"/>
</dbReference>
<dbReference type="InterPro" id="IPR036390">
    <property type="entry name" value="WH_DNA-bd_sf"/>
</dbReference>
<dbReference type="NCBIfam" id="NF002946">
    <property type="entry name" value="PRK03601.1"/>
    <property type="match status" value="1"/>
</dbReference>
<dbReference type="PANTHER" id="PTHR30579:SF8">
    <property type="entry name" value="HTH-TYPE TRANSCRIPTIONAL REGULATOR HDFR"/>
    <property type="match status" value="1"/>
</dbReference>
<dbReference type="PANTHER" id="PTHR30579">
    <property type="entry name" value="TRANSCRIPTIONAL REGULATOR"/>
    <property type="match status" value="1"/>
</dbReference>
<dbReference type="Pfam" id="PF00126">
    <property type="entry name" value="HTH_1"/>
    <property type="match status" value="1"/>
</dbReference>
<dbReference type="Pfam" id="PF03466">
    <property type="entry name" value="LysR_substrate"/>
    <property type="match status" value="1"/>
</dbReference>
<dbReference type="PRINTS" id="PR00039">
    <property type="entry name" value="HTHLYSR"/>
</dbReference>
<dbReference type="SUPFAM" id="SSF53850">
    <property type="entry name" value="Periplasmic binding protein-like II"/>
    <property type="match status" value="1"/>
</dbReference>
<dbReference type="SUPFAM" id="SSF46785">
    <property type="entry name" value="Winged helix' DNA-binding domain"/>
    <property type="match status" value="1"/>
</dbReference>
<dbReference type="PROSITE" id="PS50931">
    <property type="entry name" value="HTH_LYSR"/>
    <property type="match status" value="1"/>
</dbReference>
<accession>P0A2Q0</accession>
<accession>Q8Z336</accession>
<accession>Q9L6T4</accession>
<protein>
    <recommendedName>
        <fullName evidence="1">HTH-type transcriptional regulator HdfR</fullName>
    </recommendedName>
    <alternativeName>
        <fullName evidence="1">H-NS-dependent flhDC regulator</fullName>
    </alternativeName>
</protein>
<evidence type="ECO:0000255" key="1">
    <source>
        <dbReference type="HAMAP-Rule" id="MF_01233"/>
    </source>
</evidence>
<evidence type="ECO:0000305" key="2"/>